<evidence type="ECO:0000250" key="1"/>
<evidence type="ECO:0000255" key="2"/>
<evidence type="ECO:0000256" key="3">
    <source>
        <dbReference type="SAM" id="MobiDB-lite"/>
    </source>
</evidence>
<evidence type="ECO:0000305" key="4"/>
<protein>
    <recommendedName>
        <fullName>Large cysteine-rich periplasmic protein OmcB, serovar E</fullName>
        <shortName>Large-CRP</shortName>
    </recommendedName>
    <alternativeName>
        <fullName>60 kDa CRP</fullName>
    </alternativeName>
    <alternativeName>
        <fullName>60 kDa outer membrane protein</fullName>
    </alternativeName>
    <alternativeName>
        <fullName>Cysteine-rich outer membrane protein</fullName>
    </alternativeName>
</protein>
<organism>
    <name type="scientific">Chlamydia trachomatis</name>
    <dbReference type="NCBI Taxonomy" id="813"/>
    <lineage>
        <taxon>Bacteria</taxon>
        <taxon>Pseudomonadati</taxon>
        <taxon>Chlamydiota</taxon>
        <taxon>Chlamydiia</taxon>
        <taxon>Chlamydiales</taxon>
        <taxon>Chlamydiaceae</taxon>
        <taxon>Chlamydia/Chlamydophila group</taxon>
        <taxon>Chlamydia</taxon>
    </lineage>
</organism>
<feature type="signal peptide" evidence="2">
    <location>
        <begin position="1"/>
        <end position="22"/>
    </location>
</feature>
<feature type="propeptide" id="PRO_0000020172" evidence="2">
    <location>
        <begin position="23"/>
        <end position="40"/>
    </location>
</feature>
<feature type="chain" id="PRO_0000020173" description="Large cysteine-rich periplasmic protein OmcB, serovar E">
    <location>
        <begin position="41"/>
        <end position="547"/>
    </location>
</feature>
<feature type="region of interest" description="Disordered" evidence="3">
    <location>
        <begin position="46"/>
        <end position="83"/>
    </location>
</feature>
<feature type="compositionally biased region" description="Basic residues" evidence="3">
    <location>
        <begin position="52"/>
        <end position="61"/>
    </location>
</feature>
<feature type="compositionally biased region" description="Basic and acidic residues" evidence="3">
    <location>
        <begin position="62"/>
        <end position="79"/>
    </location>
</feature>
<feature type="sequence variant" description="In strain: DK20.">
    <original>SL</original>
    <variation>FT</variation>
    <location>
        <begin position="33"/>
        <end position="34"/>
    </location>
</feature>
<feature type="sequence variant" description="In strain: DK20.">
    <original>I</original>
    <variation>L</variation>
    <location>
        <position position="121"/>
    </location>
</feature>
<feature type="sequence variant" description="In strain: DK20.">
    <original>V</original>
    <variation>A</variation>
    <location>
        <position position="132"/>
    </location>
</feature>
<feature type="sequence variant" description="In strain: DK20.">
    <original>N</original>
    <variation>S</variation>
    <location>
        <position position="458"/>
    </location>
</feature>
<accession>P23603</accession>
<proteinExistence type="evidence at transcript level"/>
<gene>
    <name type="primary">omcB</name>
    <name type="synonym">omp2</name>
    <name type="synonym">omp2B</name>
</gene>
<keyword id="KW-0133">Cell shape</keyword>
<keyword id="KW-1015">Disulfide bond</keyword>
<keyword id="KW-0574">Periplasm</keyword>
<keyword id="KW-0732">Signal</keyword>
<reference key="1">
    <citation type="journal article" date="1990" name="Nucleic Acids Res.">
        <title>The nucleotide and derived amino acid sequence of the omp2 gene of Chlamydia trachomatis serovar E.</title>
        <authorList>
            <person name="Coles A.M."/>
            <person name="Allan I."/>
            <person name="Pearce J.H."/>
        </authorList>
    </citation>
    <scope>NUCLEOTIDE SEQUENCE [GENOMIC DNA]</scope>
    <source>
        <strain>E/DK-20</strain>
    </source>
</reference>
<reference key="2">
    <citation type="journal article" date="1991" name="Infect. Immun.">
        <title>Sequence diversity of the 60-kilodalton protein and of a putative 15-kilodalton protein between the trachoma and lymphogranuloma venereum biovars of Chlamydia trachomatis.</title>
        <authorList>
            <person name="de la Maza L.M."/>
            <person name="Fiedler T.J."/>
            <person name="Carlson E.J."/>
            <person name="Markoff B.A."/>
            <person name="Peterson E.M."/>
        </authorList>
    </citation>
    <scope>NUCLEOTIDE SEQUENCE [GENOMIC DNA]</scope>
    <source>
        <strain>BOUR / Serovar E</strain>
    </source>
</reference>
<reference key="3">
    <citation type="submission" date="1992-02" db="EMBL/GenBank/DDBJ databases">
        <title>The nucleotide sequences of 10 and 60 kDa cysteine-rich outer membrane protein genes of Chlamydia trachomatis serovar F.</title>
        <authorList>
            <person name="Zhang Y.-X."/>
            <person name="Caldwell H.D."/>
        </authorList>
    </citation>
    <scope>NUCLEOTIDE SEQUENCE [GENOMIC DNA]</scope>
</reference>
<name>OMCBE_CHLTH</name>
<dbReference type="EMBL" id="X55903">
    <property type="protein sequence ID" value="CAA39396.1"/>
    <property type="molecule type" value="Genomic_DNA"/>
</dbReference>
<dbReference type="EMBL" id="X54389">
    <property type="protein sequence ID" value="CAA38259.1"/>
    <property type="molecule type" value="Genomic_DNA"/>
</dbReference>
<dbReference type="EMBL" id="M85196">
    <property type="protein sequence ID" value="AAA23154.1"/>
    <property type="molecule type" value="Genomic_DNA"/>
</dbReference>
<dbReference type="PIR" id="B43584">
    <property type="entry name" value="B43584"/>
</dbReference>
<dbReference type="RefSeq" id="WP_009873136.1">
    <property type="nucleotide sequence ID" value="NZ_CSTK01000001.1"/>
</dbReference>
<dbReference type="eggNOG" id="COG1361">
    <property type="taxonomic scope" value="Bacteria"/>
</dbReference>
<dbReference type="GO" id="GO:0042597">
    <property type="term" value="C:periplasmic space"/>
    <property type="evidence" value="ECO:0007669"/>
    <property type="project" value="UniProtKB-SubCell"/>
</dbReference>
<dbReference type="GO" id="GO:0005201">
    <property type="term" value="F:extracellular matrix structural constituent"/>
    <property type="evidence" value="ECO:0007669"/>
    <property type="project" value="InterPro"/>
</dbReference>
<dbReference type="GO" id="GO:0008360">
    <property type="term" value="P:regulation of cell shape"/>
    <property type="evidence" value="ECO:0007669"/>
    <property type="project" value="UniProtKB-KW"/>
</dbReference>
<dbReference type="Gene3D" id="2.60.40.10">
    <property type="entry name" value="Immunoglobulins"/>
    <property type="match status" value="1"/>
</dbReference>
<dbReference type="InterPro" id="IPR003506">
    <property type="entry name" value="Chlam_OMP6"/>
</dbReference>
<dbReference type="InterPro" id="IPR051172">
    <property type="entry name" value="Chlamydia_OmcB"/>
</dbReference>
<dbReference type="InterPro" id="IPR047589">
    <property type="entry name" value="DUF11_rpt"/>
</dbReference>
<dbReference type="InterPro" id="IPR013783">
    <property type="entry name" value="Ig-like_fold"/>
</dbReference>
<dbReference type="InterPro" id="IPR001434">
    <property type="entry name" value="OmcB-like_DUF11"/>
</dbReference>
<dbReference type="NCBIfam" id="TIGR01451">
    <property type="entry name" value="B_ant_repeat"/>
    <property type="match status" value="1"/>
</dbReference>
<dbReference type="PANTHER" id="PTHR34819">
    <property type="entry name" value="LARGE CYSTEINE-RICH PERIPLASMIC PROTEIN OMCB"/>
    <property type="match status" value="1"/>
</dbReference>
<dbReference type="PANTHER" id="PTHR34819:SF4">
    <property type="entry name" value="LARGE CYSTEINE-RICH PERIPLASMIC PROTEIN OMCB"/>
    <property type="match status" value="1"/>
</dbReference>
<dbReference type="Pfam" id="PF03504">
    <property type="entry name" value="Chlam_OMP6"/>
    <property type="match status" value="1"/>
</dbReference>
<dbReference type="Pfam" id="PF01345">
    <property type="entry name" value="DUF11"/>
    <property type="match status" value="3"/>
</dbReference>
<dbReference type="PRINTS" id="PR01336">
    <property type="entry name" value="CHLAMIDIAOM6"/>
</dbReference>
<sequence>MNKLIRRAVTIFAVTSVASLFASGVLETSMAESLSTNVISLADTKAKDNTSHKSKKARKNHSKETLVDRKEVAPVHESKATGPKQDSCFGRMYTVKVNDDRNVEITQAVPEYATVGSPYPIEITATGKRDCVDVIITQQLPCEAEFVRSDPATTPTADGKLVWKIDRLGQGEKSKITVWVKPLKEGCCFTAATVCACPEIRSVTKCGQPAICVKQEGPENACLRCPVVYKINVVNQGTAIARNVVVENPVPDGYAHSSGQRVLTFTLGDMQPGEHRTITVEFCPLKRGRATNIATVSYCGGHKNTASVTTVINEPCVQVSIAGADWSYVCKPVEYVISVSNPGDLVLRDVVVEDTLSPGVTVLEAAGAQISCNKVVWTVKELNPGESLQYKVLVRAQTPGQFTNNVVVKSCSDCGTCTSCAEATTYWKGVAATHMCVVDTCDPVCVGENTVYRICVTNRGSAEDTNVSLMLKFSKELQPVSFSGPTKGTITGNTVVFDSLPRLGSKETVEFSVTLKAVSAGDARGEAILSSDTLTVPVSDTENTHIY</sequence>
<comment type="function">
    <text evidence="1">In elementary bodies (EBs, the infectious stage, which is able to survive outside the host cell) provides the structural integrity of the outer envelope through disulfide cross-links with the small cysteine-rich protein and the major outer membrane protein. It has been described in publications as the Sarkosyl-insoluble COMC (Chlamydia outer membrane complex), and serves as the functional equivalent of peptidoglycan (By similarity).</text>
</comment>
<comment type="subunit">
    <text evidence="1">Part of a disulfide cross-linked outer membrane complex (COMC) composed of the major outer membrane porin (MOMP), the small cysteine-rich protein (OmcA) and the large cysteine-rich periplasmic protein (OmcB).</text>
</comment>
<comment type="subcellular location">
    <subcellularLocation>
        <location evidence="4">Periplasm</location>
    </subcellularLocation>
</comment>
<comment type="developmental stage">
    <text>It is present but the disulfide bonds are reduced in the intracellular reticulate bodies (RBs).</text>
</comment>
<comment type="miscellaneous">
    <text>The sequence shown is that of strain DK 20.</text>
</comment>
<comment type="caution">
    <text evidence="4">Was thought to be an outer membrane protein as it is part of a disulfide cross-linked complex that is insoluble in the detergent Sarkosyl; however based on experiments in C.psittaci it is likely to be periplasmic.</text>
</comment>